<organism>
    <name type="scientific">Shewanella halifaxensis (strain HAW-EB4)</name>
    <dbReference type="NCBI Taxonomy" id="458817"/>
    <lineage>
        <taxon>Bacteria</taxon>
        <taxon>Pseudomonadati</taxon>
        <taxon>Pseudomonadota</taxon>
        <taxon>Gammaproteobacteria</taxon>
        <taxon>Alteromonadales</taxon>
        <taxon>Shewanellaceae</taxon>
        <taxon>Shewanella</taxon>
    </lineage>
</organism>
<comment type="similarity">
    <text evidence="1">Belongs to the bacterial ribosomal protein bL28 family.</text>
</comment>
<accession>B0TQL2</accession>
<sequence length="78" mass="9172">MSRVCQVTGKRPMVGNNRSHAKNATRRRFLPNLQNHRFWLENEKRFVQLRISTKGMRIIDKKGIEVVIAELRARGEKV</sequence>
<proteinExistence type="inferred from homology"/>
<evidence type="ECO:0000255" key="1">
    <source>
        <dbReference type="HAMAP-Rule" id="MF_00373"/>
    </source>
</evidence>
<evidence type="ECO:0000256" key="2">
    <source>
        <dbReference type="SAM" id="MobiDB-lite"/>
    </source>
</evidence>
<evidence type="ECO:0000305" key="3"/>
<feature type="chain" id="PRO_1000079863" description="Large ribosomal subunit protein bL28">
    <location>
        <begin position="1"/>
        <end position="78"/>
    </location>
</feature>
<feature type="region of interest" description="Disordered" evidence="2">
    <location>
        <begin position="1"/>
        <end position="21"/>
    </location>
</feature>
<name>RL28_SHEHH</name>
<protein>
    <recommendedName>
        <fullName evidence="1">Large ribosomal subunit protein bL28</fullName>
    </recommendedName>
    <alternativeName>
        <fullName evidence="3">50S ribosomal protein L28</fullName>
    </alternativeName>
</protein>
<keyword id="KW-0687">Ribonucleoprotein</keyword>
<keyword id="KW-0689">Ribosomal protein</keyword>
<gene>
    <name evidence="1" type="primary">rpmB</name>
    <name type="ordered locus">Shal_0430</name>
</gene>
<dbReference type="EMBL" id="CP000931">
    <property type="protein sequence ID" value="ABZ75005.1"/>
    <property type="molecule type" value="Genomic_DNA"/>
</dbReference>
<dbReference type="RefSeq" id="WP_012275559.1">
    <property type="nucleotide sequence ID" value="NC_010334.1"/>
</dbReference>
<dbReference type="SMR" id="B0TQL2"/>
<dbReference type="STRING" id="458817.Shal_0430"/>
<dbReference type="KEGG" id="shl:Shal_0430"/>
<dbReference type="eggNOG" id="COG0227">
    <property type="taxonomic scope" value="Bacteria"/>
</dbReference>
<dbReference type="HOGENOM" id="CLU_064548_3_1_6"/>
<dbReference type="OrthoDB" id="9805609at2"/>
<dbReference type="Proteomes" id="UP000001317">
    <property type="component" value="Chromosome"/>
</dbReference>
<dbReference type="GO" id="GO:0022625">
    <property type="term" value="C:cytosolic large ribosomal subunit"/>
    <property type="evidence" value="ECO:0007669"/>
    <property type="project" value="TreeGrafter"/>
</dbReference>
<dbReference type="GO" id="GO:0003735">
    <property type="term" value="F:structural constituent of ribosome"/>
    <property type="evidence" value="ECO:0007669"/>
    <property type="project" value="InterPro"/>
</dbReference>
<dbReference type="GO" id="GO:0006412">
    <property type="term" value="P:translation"/>
    <property type="evidence" value="ECO:0007669"/>
    <property type="project" value="UniProtKB-UniRule"/>
</dbReference>
<dbReference type="FunFam" id="2.30.170.40:FF:000001">
    <property type="entry name" value="50S ribosomal protein L28"/>
    <property type="match status" value="1"/>
</dbReference>
<dbReference type="Gene3D" id="2.30.170.40">
    <property type="entry name" value="Ribosomal protein L28/L24"/>
    <property type="match status" value="1"/>
</dbReference>
<dbReference type="HAMAP" id="MF_00373">
    <property type="entry name" value="Ribosomal_bL28"/>
    <property type="match status" value="1"/>
</dbReference>
<dbReference type="InterPro" id="IPR026569">
    <property type="entry name" value="Ribosomal_bL28"/>
</dbReference>
<dbReference type="InterPro" id="IPR034704">
    <property type="entry name" value="Ribosomal_bL28/bL31-like_sf"/>
</dbReference>
<dbReference type="InterPro" id="IPR001383">
    <property type="entry name" value="Ribosomal_bL28_bact-type"/>
</dbReference>
<dbReference type="InterPro" id="IPR037147">
    <property type="entry name" value="Ribosomal_bL28_sf"/>
</dbReference>
<dbReference type="NCBIfam" id="TIGR00009">
    <property type="entry name" value="L28"/>
    <property type="match status" value="1"/>
</dbReference>
<dbReference type="PANTHER" id="PTHR13528">
    <property type="entry name" value="39S RIBOSOMAL PROTEIN L28, MITOCHONDRIAL"/>
    <property type="match status" value="1"/>
</dbReference>
<dbReference type="PANTHER" id="PTHR13528:SF2">
    <property type="entry name" value="LARGE RIBOSOMAL SUBUNIT PROTEIN BL28M"/>
    <property type="match status" value="1"/>
</dbReference>
<dbReference type="Pfam" id="PF00830">
    <property type="entry name" value="Ribosomal_L28"/>
    <property type="match status" value="1"/>
</dbReference>
<dbReference type="SUPFAM" id="SSF143800">
    <property type="entry name" value="L28p-like"/>
    <property type="match status" value="1"/>
</dbReference>
<reference key="1">
    <citation type="submission" date="2008-01" db="EMBL/GenBank/DDBJ databases">
        <title>Complete sequence of Shewanella halifaxensis HAW-EB4.</title>
        <authorList>
            <consortium name="US DOE Joint Genome Institute"/>
            <person name="Copeland A."/>
            <person name="Lucas S."/>
            <person name="Lapidus A."/>
            <person name="Glavina del Rio T."/>
            <person name="Dalin E."/>
            <person name="Tice H."/>
            <person name="Bruce D."/>
            <person name="Goodwin L."/>
            <person name="Pitluck S."/>
            <person name="Sims D."/>
            <person name="Brettin T."/>
            <person name="Detter J.C."/>
            <person name="Han C."/>
            <person name="Kuske C.R."/>
            <person name="Schmutz J."/>
            <person name="Larimer F."/>
            <person name="Land M."/>
            <person name="Hauser L."/>
            <person name="Kyrpides N."/>
            <person name="Kim E."/>
            <person name="Zhao J.-S."/>
            <person name="Richardson P."/>
        </authorList>
    </citation>
    <scope>NUCLEOTIDE SEQUENCE [LARGE SCALE GENOMIC DNA]</scope>
    <source>
        <strain>HAW-EB4</strain>
    </source>
</reference>